<organism>
    <name type="scientific">Escherichia coli (strain K12 / DH10B)</name>
    <dbReference type="NCBI Taxonomy" id="316385"/>
    <lineage>
        <taxon>Bacteria</taxon>
        <taxon>Pseudomonadati</taxon>
        <taxon>Pseudomonadota</taxon>
        <taxon>Gammaproteobacteria</taxon>
        <taxon>Enterobacterales</taxon>
        <taxon>Enterobacteriaceae</taxon>
        <taxon>Escherichia</taxon>
    </lineage>
</organism>
<proteinExistence type="inferred from homology"/>
<evidence type="ECO:0000255" key="1">
    <source>
        <dbReference type="HAMAP-Rule" id="MF_01660"/>
    </source>
</evidence>
<accession>B1X8X7</accession>
<gene>
    <name evidence="1" type="primary">menH</name>
    <name type="ordered locus">ECDH10B_2424</name>
</gene>
<comment type="function">
    <text evidence="1">Catalyzes a proton abstraction reaction that results in 2,5-elimination of pyruvate from 2-succinyl-5-enolpyruvyl-6-hydroxy-3-cyclohexene-1-carboxylate (SEPHCHC) and the formation of 2-succinyl-6-hydroxy-2,4-cyclohexadiene-1-carboxylate (SHCHC).</text>
</comment>
<comment type="catalytic activity">
    <reaction evidence="1">
        <text>5-enolpyruvoyl-6-hydroxy-2-succinyl-cyclohex-3-ene-1-carboxylate = (1R,6R)-6-hydroxy-2-succinyl-cyclohexa-2,4-diene-1-carboxylate + pyruvate</text>
        <dbReference type="Rhea" id="RHEA:25597"/>
        <dbReference type="ChEBI" id="CHEBI:15361"/>
        <dbReference type="ChEBI" id="CHEBI:58689"/>
        <dbReference type="ChEBI" id="CHEBI:58818"/>
        <dbReference type="EC" id="4.2.99.20"/>
    </reaction>
</comment>
<comment type="pathway">
    <text evidence="1">Quinol/quinone metabolism; 1,4-dihydroxy-2-naphthoate biosynthesis; 1,4-dihydroxy-2-naphthoate from chorismate: step 3/7.</text>
</comment>
<comment type="pathway">
    <text evidence="1">Quinol/quinone metabolism; menaquinone biosynthesis.</text>
</comment>
<comment type="subunit">
    <text evidence="1">Monomer.</text>
</comment>
<comment type="similarity">
    <text evidence="1">Belongs to the AB hydrolase superfamily. MenH family.</text>
</comment>
<sequence>MILHAQAKHGKPGLPWLVFLHGFSGDCHEWQEVGEAFADYSRLYVDLPGHGGSAAISVDGFDDVTDLLRKTLVSYNILDFWLVGYSLGGRVAMMAACQGLAGLCGVIVEGGHPGLQNAEQRAERQRSDRQWVQRFLTEPLTAVFADWYQQPVFASLNDDQRRELVALRSNNNGATLAAMLEATSLAVQPDLRANLSARTFAFYYLCGERDSKFRALAAELAADCHVIPRAGHNAHRENPAGVIASLAQILRF</sequence>
<reference key="1">
    <citation type="journal article" date="2008" name="J. Bacteriol.">
        <title>The complete genome sequence of Escherichia coli DH10B: insights into the biology of a laboratory workhorse.</title>
        <authorList>
            <person name="Durfee T."/>
            <person name="Nelson R."/>
            <person name="Baldwin S."/>
            <person name="Plunkett G. III"/>
            <person name="Burland V."/>
            <person name="Mau B."/>
            <person name="Petrosino J.F."/>
            <person name="Qin X."/>
            <person name="Muzny D.M."/>
            <person name="Ayele M."/>
            <person name="Gibbs R.A."/>
            <person name="Csorgo B."/>
            <person name="Posfai G."/>
            <person name="Weinstock G.M."/>
            <person name="Blattner F.R."/>
        </authorList>
    </citation>
    <scope>NUCLEOTIDE SEQUENCE [LARGE SCALE GENOMIC DNA]</scope>
    <source>
        <strain>K12 / DH10B</strain>
    </source>
</reference>
<protein>
    <recommendedName>
        <fullName evidence="1">2-succinyl-6-hydroxy-2,4-cyclohexadiene-1-carboxylate synthase</fullName>
        <shortName evidence="1">SHCHC synthase</shortName>
        <ecNumber evidence="1">4.2.99.20</ecNumber>
    </recommendedName>
</protein>
<name>MENH_ECODH</name>
<feature type="chain" id="PRO_0000341906" description="2-succinyl-6-hydroxy-2,4-cyclohexadiene-1-carboxylate synthase">
    <location>
        <begin position="1"/>
        <end position="252"/>
    </location>
</feature>
<dbReference type="EC" id="4.2.99.20" evidence="1"/>
<dbReference type="EMBL" id="CP000948">
    <property type="protein sequence ID" value="ACB03424.1"/>
    <property type="molecule type" value="Genomic_DNA"/>
</dbReference>
<dbReference type="RefSeq" id="WP_000600499.1">
    <property type="nucleotide sequence ID" value="NC_010473.1"/>
</dbReference>
<dbReference type="SMR" id="B1X8X7"/>
<dbReference type="ESTHER" id="ecoli-YFBB">
    <property type="family name" value="MenH_SHCHC"/>
</dbReference>
<dbReference type="MEROPS" id="S33.996"/>
<dbReference type="KEGG" id="ecd:ECDH10B_2424"/>
<dbReference type="HOGENOM" id="CLU_020336_38_2_6"/>
<dbReference type="UniPathway" id="UPA00079"/>
<dbReference type="UniPathway" id="UPA01057">
    <property type="reaction ID" value="UER00900"/>
</dbReference>
<dbReference type="GO" id="GO:0070205">
    <property type="term" value="F:2-succinyl-6-hydroxy-2,4-cyclohexadiene-1-carboxylate synthase activity"/>
    <property type="evidence" value="ECO:0007669"/>
    <property type="project" value="UniProtKB-UniRule"/>
</dbReference>
<dbReference type="GO" id="GO:0009234">
    <property type="term" value="P:menaquinone biosynthetic process"/>
    <property type="evidence" value="ECO:0007669"/>
    <property type="project" value="UniProtKB-UniRule"/>
</dbReference>
<dbReference type="FunFam" id="3.40.50.1820:FF:000038">
    <property type="entry name" value="2-succinyl-6-hydroxy-2,4-cyclohexadiene-1-carboxylate synthase"/>
    <property type="match status" value="1"/>
</dbReference>
<dbReference type="Gene3D" id="3.40.50.1820">
    <property type="entry name" value="alpha/beta hydrolase"/>
    <property type="match status" value="1"/>
</dbReference>
<dbReference type="HAMAP" id="MF_01660">
    <property type="entry name" value="MenH"/>
    <property type="match status" value="1"/>
</dbReference>
<dbReference type="InterPro" id="IPR000073">
    <property type="entry name" value="AB_hydrolase_1"/>
</dbReference>
<dbReference type="InterPro" id="IPR029058">
    <property type="entry name" value="AB_hydrolase_fold"/>
</dbReference>
<dbReference type="InterPro" id="IPR022485">
    <property type="entry name" value="SHCHC_synthase_MenH"/>
</dbReference>
<dbReference type="NCBIfam" id="TIGR03695">
    <property type="entry name" value="menH_SHCHC"/>
    <property type="match status" value="1"/>
</dbReference>
<dbReference type="NCBIfam" id="NF008340">
    <property type="entry name" value="PRK11126.1"/>
    <property type="match status" value="1"/>
</dbReference>
<dbReference type="PANTHER" id="PTHR42916">
    <property type="entry name" value="2-SUCCINYL-5-ENOLPYRUVYL-6-HYDROXY-3-CYCLOHEXENE-1-CARBOXYLATE SYNTHASE"/>
    <property type="match status" value="1"/>
</dbReference>
<dbReference type="PANTHER" id="PTHR42916:SF1">
    <property type="entry name" value="PROTEIN PHYLLO, CHLOROPLASTIC"/>
    <property type="match status" value="1"/>
</dbReference>
<dbReference type="Pfam" id="PF12697">
    <property type="entry name" value="Abhydrolase_6"/>
    <property type="match status" value="1"/>
</dbReference>
<dbReference type="SUPFAM" id="SSF53474">
    <property type="entry name" value="alpha/beta-Hydrolases"/>
    <property type="match status" value="1"/>
</dbReference>
<keyword id="KW-0456">Lyase</keyword>
<keyword id="KW-0474">Menaquinone biosynthesis</keyword>